<evidence type="ECO:0000255" key="1">
    <source>
        <dbReference type="HAMAP-Rule" id="MF_00036"/>
    </source>
</evidence>
<keyword id="KW-0030">Aminoacyl-tRNA synthetase</keyword>
<keyword id="KW-0067">ATP-binding</keyword>
<keyword id="KW-0963">Cytoplasm</keyword>
<keyword id="KW-0436">Ligase</keyword>
<keyword id="KW-0479">Metal-binding</keyword>
<keyword id="KW-0547">Nucleotide-binding</keyword>
<keyword id="KW-0648">Protein biosynthesis</keyword>
<keyword id="KW-0694">RNA-binding</keyword>
<keyword id="KW-0820">tRNA-binding</keyword>
<keyword id="KW-0862">Zinc</keyword>
<dbReference type="EC" id="6.1.1.7" evidence="1"/>
<dbReference type="EMBL" id="AE017332">
    <property type="protein sequence ID" value="AAV27761.1"/>
    <property type="molecule type" value="Genomic_DNA"/>
</dbReference>
<dbReference type="RefSeq" id="WP_011206017.1">
    <property type="nucleotide sequence ID" value="NC_006360.1"/>
</dbReference>
<dbReference type="SMR" id="Q601M2"/>
<dbReference type="KEGG" id="mhy:mhp180"/>
<dbReference type="eggNOG" id="COG0013">
    <property type="taxonomic scope" value="Bacteria"/>
</dbReference>
<dbReference type="HOGENOM" id="CLU_004485_1_1_14"/>
<dbReference type="PhylomeDB" id="Q601M2"/>
<dbReference type="Proteomes" id="UP000006822">
    <property type="component" value="Chromosome"/>
</dbReference>
<dbReference type="GO" id="GO:0005829">
    <property type="term" value="C:cytosol"/>
    <property type="evidence" value="ECO:0007669"/>
    <property type="project" value="TreeGrafter"/>
</dbReference>
<dbReference type="GO" id="GO:0004813">
    <property type="term" value="F:alanine-tRNA ligase activity"/>
    <property type="evidence" value="ECO:0007669"/>
    <property type="project" value="UniProtKB-UniRule"/>
</dbReference>
<dbReference type="GO" id="GO:0002161">
    <property type="term" value="F:aminoacyl-tRNA deacylase activity"/>
    <property type="evidence" value="ECO:0007669"/>
    <property type="project" value="TreeGrafter"/>
</dbReference>
<dbReference type="GO" id="GO:0005524">
    <property type="term" value="F:ATP binding"/>
    <property type="evidence" value="ECO:0007669"/>
    <property type="project" value="UniProtKB-UniRule"/>
</dbReference>
<dbReference type="GO" id="GO:0000049">
    <property type="term" value="F:tRNA binding"/>
    <property type="evidence" value="ECO:0007669"/>
    <property type="project" value="UniProtKB-KW"/>
</dbReference>
<dbReference type="GO" id="GO:0008270">
    <property type="term" value="F:zinc ion binding"/>
    <property type="evidence" value="ECO:0007669"/>
    <property type="project" value="UniProtKB-UniRule"/>
</dbReference>
<dbReference type="GO" id="GO:0006419">
    <property type="term" value="P:alanyl-tRNA aminoacylation"/>
    <property type="evidence" value="ECO:0007669"/>
    <property type="project" value="UniProtKB-UniRule"/>
</dbReference>
<dbReference type="CDD" id="cd00673">
    <property type="entry name" value="AlaRS_core"/>
    <property type="match status" value="1"/>
</dbReference>
<dbReference type="FunFam" id="3.30.930.10:FF:000046">
    <property type="entry name" value="Alanine--tRNA ligase"/>
    <property type="match status" value="1"/>
</dbReference>
<dbReference type="FunFam" id="3.30.980.10:FF:000004">
    <property type="entry name" value="Alanine--tRNA ligase, cytoplasmic"/>
    <property type="match status" value="1"/>
</dbReference>
<dbReference type="Gene3D" id="2.40.30.130">
    <property type="match status" value="1"/>
</dbReference>
<dbReference type="Gene3D" id="3.10.310.40">
    <property type="match status" value="1"/>
</dbReference>
<dbReference type="Gene3D" id="3.30.930.10">
    <property type="entry name" value="Bira Bifunctional Protein, Domain 2"/>
    <property type="match status" value="1"/>
</dbReference>
<dbReference type="Gene3D" id="3.30.980.10">
    <property type="entry name" value="Threonyl-trna Synthetase, Chain A, domain 2"/>
    <property type="match status" value="1"/>
</dbReference>
<dbReference type="HAMAP" id="MF_00036_B">
    <property type="entry name" value="Ala_tRNA_synth_B"/>
    <property type="match status" value="1"/>
</dbReference>
<dbReference type="InterPro" id="IPR045864">
    <property type="entry name" value="aa-tRNA-synth_II/BPL/LPL"/>
</dbReference>
<dbReference type="InterPro" id="IPR002318">
    <property type="entry name" value="Ala-tRNA-lgiase_IIc"/>
</dbReference>
<dbReference type="InterPro" id="IPR018162">
    <property type="entry name" value="Ala-tRNA-ligase_IIc_anticod-bd"/>
</dbReference>
<dbReference type="InterPro" id="IPR018165">
    <property type="entry name" value="Ala-tRNA-synth_IIc_core"/>
</dbReference>
<dbReference type="InterPro" id="IPR018164">
    <property type="entry name" value="Ala-tRNA-synth_IIc_N"/>
</dbReference>
<dbReference type="InterPro" id="IPR050058">
    <property type="entry name" value="Ala-tRNA_ligase"/>
</dbReference>
<dbReference type="InterPro" id="IPR023033">
    <property type="entry name" value="Ala_tRNA_ligase_euk/bac"/>
</dbReference>
<dbReference type="InterPro" id="IPR018163">
    <property type="entry name" value="Thr/Ala-tRNA-synth_IIc_edit"/>
</dbReference>
<dbReference type="InterPro" id="IPR009000">
    <property type="entry name" value="Transl_B-barrel_sf"/>
</dbReference>
<dbReference type="InterPro" id="IPR012947">
    <property type="entry name" value="tRNA_SAD"/>
</dbReference>
<dbReference type="NCBIfam" id="TIGR00344">
    <property type="entry name" value="alaS"/>
    <property type="match status" value="1"/>
</dbReference>
<dbReference type="PANTHER" id="PTHR11777:SF9">
    <property type="entry name" value="ALANINE--TRNA LIGASE, CYTOPLASMIC"/>
    <property type="match status" value="1"/>
</dbReference>
<dbReference type="PANTHER" id="PTHR11777">
    <property type="entry name" value="ALANYL-TRNA SYNTHETASE"/>
    <property type="match status" value="1"/>
</dbReference>
<dbReference type="Pfam" id="PF01411">
    <property type="entry name" value="tRNA-synt_2c"/>
    <property type="match status" value="1"/>
</dbReference>
<dbReference type="Pfam" id="PF07973">
    <property type="entry name" value="tRNA_SAD"/>
    <property type="match status" value="1"/>
</dbReference>
<dbReference type="PRINTS" id="PR00980">
    <property type="entry name" value="TRNASYNTHALA"/>
</dbReference>
<dbReference type="SMART" id="SM00863">
    <property type="entry name" value="tRNA_SAD"/>
    <property type="match status" value="1"/>
</dbReference>
<dbReference type="SUPFAM" id="SSF55681">
    <property type="entry name" value="Class II aaRS and biotin synthetases"/>
    <property type="match status" value="1"/>
</dbReference>
<dbReference type="SUPFAM" id="SSF101353">
    <property type="entry name" value="Putative anticodon-binding domain of alanyl-tRNA synthetase (AlaRS)"/>
    <property type="match status" value="1"/>
</dbReference>
<dbReference type="SUPFAM" id="SSF55186">
    <property type="entry name" value="ThrRS/AlaRS common domain"/>
    <property type="match status" value="1"/>
</dbReference>
<dbReference type="SUPFAM" id="SSF50447">
    <property type="entry name" value="Translation proteins"/>
    <property type="match status" value="1"/>
</dbReference>
<dbReference type="PROSITE" id="PS50860">
    <property type="entry name" value="AA_TRNA_LIGASE_II_ALA"/>
    <property type="match status" value="1"/>
</dbReference>
<proteinExistence type="inferred from homology"/>
<accession>Q601M2</accession>
<protein>
    <recommendedName>
        <fullName evidence="1">Alanine--tRNA ligase</fullName>
        <ecNumber evidence="1">6.1.1.7</ecNumber>
    </recommendedName>
    <alternativeName>
        <fullName evidence="1">Alanyl-tRNA synthetase</fullName>
        <shortName evidence="1">AlaRS</shortName>
    </alternativeName>
</protein>
<sequence>MEKLSANEIRQLWIDFFREKNHFFIESKPLVPQNDDSLLWINSGVATLKDYFTGKKIPPSKRLVNSQKALRTNDIENVGLTSRHHTLFEMLGNFSIGDYFKTEAIDYAYEFLTKKLKLDPKNLFITYYDGDDITFEKWKSLGFSNEKLIKGSKKTNFWDLGQGPCGPCSEIYFDRGPKFDSRGSELIKNEIENDRFIEIWNIVFSEFNNDGQQNYAPLKSKNIDTGAGFERIVSILQDGPTNYDTDLFLPIIAEIEKNTVFRYKIENYFLKKPRQTQINKSFRIIADHIRAITLAINDGVQPSNLHRGYIIRRLIRRAYWNGKKLGISHPFLYKLVEIVGKTLDYRFDIPTISKIILNEEENFAKTLEIGYNLLESQLKINKNQIKPVTVFKLFETYGFPVELTKEILAEKNIDFDLSQLVEFQEKHSQISRAKKTTGMQKVINSLTQIKAKISDFIGYHTHHIETKISFLANKDEEVAETNGENLSYVIFEKTPFYATAGGQKHDQGWIIQNNSTIEILDVFKDKFLNNIHVFKGKIVKNQPVFLKLDTKNRLNLERNHSGTHLLFASLRQEFGSEIKQLGSDNNEDRLTFDFPLNRKPSDQEIKSVENRINSYINQKIKRKYLVTNLEEAQKLNAIMTLEESEYMDPNSLRLVIFDKITTDLCGGTHIENTELLEKFTILSCQSKGSGIYRIRAVTSWNKYFEFLKGKIQEILSKISALKNKIKKIEPNFGLNLPNLVDLEQQFDYLKKIEDDLRIYYKKLLKSQLRIAKSELDANKIIEIGKFSFYLDFNLPLHNLKQIAATWREQNPRISFILGANLVNNEFLIIVSSAILASNQILEKILEIFTGSGGGNYKIAQGKIQKKPEKEVFIKLLWENITEF</sequence>
<name>SYA_MESH2</name>
<gene>
    <name evidence="1" type="primary">alaS</name>
    <name type="ordered locus">mhp180</name>
</gene>
<comment type="function">
    <text evidence="1">Catalyzes the attachment of alanine to tRNA(Ala) in a two-step reaction: alanine is first activated by ATP to form Ala-AMP and then transferred to the acceptor end of tRNA(Ala). Also edits incorrectly charged Ser-tRNA(Ala) and Gly-tRNA(Ala) via its editing domain.</text>
</comment>
<comment type="catalytic activity">
    <reaction evidence="1">
        <text>tRNA(Ala) + L-alanine + ATP = L-alanyl-tRNA(Ala) + AMP + diphosphate</text>
        <dbReference type="Rhea" id="RHEA:12540"/>
        <dbReference type="Rhea" id="RHEA-COMP:9657"/>
        <dbReference type="Rhea" id="RHEA-COMP:9923"/>
        <dbReference type="ChEBI" id="CHEBI:30616"/>
        <dbReference type="ChEBI" id="CHEBI:33019"/>
        <dbReference type="ChEBI" id="CHEBI:57972"/>
        <dbReference type="ChEBI" id="CHEBI:78442"/>
        <dbReference type="ChEBI" id="CHEBI:78497"/>
        <dbReference type="ChEBI" id="CHEBI:456215"/>
        <dbReference type="EC" id="6.1.1.7"/>
    </reaction>
</comment>
<comment type="cofactor">
    <cofactor evidence="1">
        <name>Zn(2+)</name>
        <dbReference type="ChEBI" id="CHEBI:29105"/>
    </cofactor>
    <text evidence="1">Binds 1 zinc ion per subunit.</text>
</comment>
<comment type="subcellular location">
    <subcellularLocation>
        <location evidence="1">Cytoplasm</location>
    </subcellularLocation>
</comment>
<comment type="domain">
    <text evidence="1">Consists of three domains; the N-terminal catalytic domain, the editing domain and the C-terminal C-Ala domain. The editing domain removes incorrectly charged amino acids, while the C-Ala domain, along with tRNA(Ala), serves as a bridge to cooperatively bring together the editing and aminoacylation centers thus stimulating deacylation of misacylated tRNAs.</text>
</comment>
<comment type="similarity">
    <text evidence="1">Belongs to the class-II aminoacyl-tRNA synthetase family.</text>
</comment>
<reference key="1">
    <citation type="journal article" date="2004" name="J. Bacteriol.">
        <title>The genome sequence of Mycoplasma hyopneumoniae strain 232, the agent of swine mycoplasmosis.</title>
        <authorList>
            <person name="Minion F.C."/>
            <person name="Lefkowitz E.J."/>
            <person name="Madsen M.L."/>
            <person name="Cleary B.J."/>
            <person name="Swartzell S.M."/>
            <person name="Mahairas G.G."/>
        </authorList>
    </citation>
    <scope>NUCLEOTIDE SEQUENCE [LARGE SCALE GENOMIC DNA]</scope>
    <source>
        <strain>232</strain>
    </source>
</reference>
<feature type="chain" id="PRO_0000075150" description="Alanine--tRNA ligase">
    <location>
        <begin position="1"/>
        <end position="883"/>
    </location>
</feature>
<feature type="binding site" evidence="1">
    <location>
        <position position="560"/>
    </location>
    <ligand>
        <name>Zn(2+)</name>
        <dbReference type="ChEBI" id="CHEBI:29105"/>
    </ligand>
</feature>
<feature type="binding site" evidence="1">
    <location>
        <position position="564"/>
    </location>
    <ligand>
        <name>Zn(2+)</name>
        <dbReference type="ChEBI" id="CHEBI:29105"/>
    </ligand>
</feature>
<feature type="binding site" evidence="1">
    <location>
        <position position="665"/>
    </location>
    <ligand>
        <name>Zn(2+)</name>
        <dbReference type="ChEBI" id="CHEBI:29105"/>
    </ligand>
</feature>
<feature type="binding site" evidence="1">
    <location>
        <position position="669"/>
    </location>
    <ligand>
        <name>Zn(2+)</name>
        <dbReference type="ChEBI" id="CHEBI:29105"/>
    </ligand>
</feature>
<organism>
    <name type="scientific">Mesomycoplasma hyopneumoniae (strain 232)</name>
    <name type="common">Mycoplasma hyopneumoniae</name>
    <dbReference type="NCBI Taxonomy" id="295358"/>
    <lineage>
        <taxon>Bacteria</taxon>
        <taxon>Bacillati</taxon>
        <taxon>Mycoplasmatota</taxon>
        <taxon>Mycoplasmoidales</taxon>
        <taxon>Metamycoplasmataceae</taxon>
        <taxon>Mesomycoplasma</taxon>
    </lineage>
</organism>